<reference key="1">
    <citation type="journal article" date="1996" name="Eur. J. Biochem.">
        <title>Molecular characterization and expression analysis of Manduca sexta allatotropin.</title>
        <authorList>
            <person name="Taylor P.A. III"/>
            <person name="Bhatt T.R."/>
            <person name="Horodyski F.M."/>
        </authorList>
    </citation>
    <scope>NUCLEOTIDE SEQUENCE [MRNA] (ISOFORMS 1; 2 AND 3)</scope>
    <scope>TISSUE SPECIFICITY</scope>
    <scope>DEVELOPMENTAL STAGE</scope>
</reference>
<reference key="2">
    <citation type="journal article" date="1989" name="Science">
        <title>Identification of an allatotropin from adult Manduca Sexta.</title>
        <authorList>
            <person name="Kataoka H."/>
            <person name="Toschi A."/>
            <person name="Li J.P."/>
            <person name="Carney R.L."/>
            <person name="Schooley D.A."/>
            <person name="Kramer S.J."/>
        </authorList>
    </citation>
    <scope>PROTEIN SEQUENCE OF 37-49</scope>
    <scope>AMIDATION AT PHE-49</scope>
    <scope>FUNCTION</scope>
    <scope>TISSUE SPECIFICITY</scope>
    <source>
        <tissue>Corpora cardiaca</tissue>
    </source>
</reference>
<reference key="3">
    <citation type="journal article" date="1994" name="J. Exp. Biol.">
        <title>Allatotropin is a cardioacceleratory peptide in Manduca sexta.</title>
        <authorList>
            <person name="Veenstra J.A."/>
            <person name="Lehman H.K."/>
            <person name="Davis N.T."/>
        </authorList>
    </citation>
    <scope>FUNCTION</scope>
    <scope>TISSUE SPECIFICITY</scope>
    <scope>DEVELOPMENTAL STAGE</scope>
</reference>
<reference key="4">
    <citation type="journal article" date="1998" name="J. Exp. Biol.">
        <title>Inhibition of midgut ion transport by allatotropin (Mas-AT) and Manduca FLRFamides in the tobacco hornworm Manduca sexta.</title>
        <authorList>
            <person name="Lee K.Y."/>
            <person name="Horodyski F.M."/>
            <person name="Chamberlin M.E."/>
        </authorList>
    </citation>
    <scope>FUNCTION</scope>
</reference>
<reference key="5">
    <citation type="journal article" date="1999" name="J. Comp. Neurol.">
        <title>Expression of the Manduca sexta allatotropin gene in cells of the central and enteric nervous systems.</title>
        <authorList>
            <person name="Bhatt T.R."/>
            <person name="Horodyski F.M."/>
        </authorList>
    </citation>
    <scope>TISSUE SPECIFICITY</scope>
    <scope>DEVELOPMENTAL STAGE</scope>
</reference>
<reference key="6">
    <citation type="journal article" date="2001" name="Peptides">
        <title>Alternative splicing of transcripts expressed by the Manduca sexta allatotropin (Mas-AT) gene is regulated in a tissue-specific manner.</title>
        <authorList>
            <person name="Horodyski F.M."/>
            <person name="Bhatt S.R."/>
            <person name="Lee K.Y."/>
        </authorList>
    </citation>
    <scope>ALTERNATIVE SPLICING</scope>
    <scope>TISSUE SPECIFICITY</scope>
</reference>
<reference key="7">
    <citation type="journal article" date="2002" name="Peptides">
        <title>Restriction of nutrient intake results in the increase of a specific Manduca sexta allatotropin (Manse-AT) mRNA in the larval nerve cord.</title>
        <authorList>
            <person name="Lee K.Y."/>
            <person name="Horodyski F.M."/>
        </authorList>
    </citation>
    <scope>INDUCTION</scope>
    <scope>TISSUE SPECIFICITY</scope>
    <scope>DEVELOPMENTAL STAGE</scope>
</reference>
<reference key="8">
    <citation type="journal article" date="2006" name="Peptides">
        <title>Effects of starvation and mating on corpora allata activity and allatotropin (Manse-AT) gene expression in Manduca sexta.</title>
        <authorList>
            <person name="Lee K.Y."/>
            <person name="Horodyski F.M."/>
        </authorList>
    </citation>
    <scope>INDUCTION</scope>
    <scope>TISSUE SPECIFICITY</scope>
    <scope>DEVELOPMENTAL STAGE</scope>
</reference>
<organism>
    <name type="scientific">Manduca sexta</name>
    <name type="common">Tobacco hawkmoth</name>
    <name type="synonym">Tobacco hornworm</name>
    <dbReference type="NCBI Taxonomy" id="7130"/>
    <lineage>
        <taxon>Eukaryota</taxon>
        <taxon>Metazoa</taxon>
        <taxon>Ecdysozoa</taxon>
        <taxon>Arthropoda</taxon>
        <taxon>Hexapoda</taxon>
        <taxon>Insecta</taxon>
        <taxon>Pterygota</taxon>
        <taxon>Neoptera</taxon>
        <taxon>Endopterygota</taxon>
        <taxon>Lepidoptera</taxon>
        <taxon>Glossata</taxon>
        <taxon>Ditrysia</taxon>
        <taxon>Bombycoidea</taxon>
        <taxon>Sphingidae</taxon>
        <taxon>Sphinginae</taxon>
        <taxon>Sphingini</taxon>
        <taxon>Manduca</taxon>
    </lineage>
</organism>
<accession>P21786</accession>
<sequence>MNLTMQLAVIVAVCLCLAEGAPDVRLTRTKQQRPTRGFKNVEMMTARGFGKRDRPHPRAERDVDHQAPSARPNRGTPTFKSPTVGIARDFGKRASQYGNEEEIRVTRGTFKPNSNILIARGYGKRTQLPQIDGVYGLDNFWEMLETSPEREVQEVDEKTLESIPLDWFVNEMLNNPDFARSVVRKFIDLNQDGMLSSEELLRNF</sequence>
<protein>
    <recommendedName>
        <fullName>Allatotropin</fullName>
        <shortName>AT</shortName>
    </recommendedName>
</protein>
<keyword id="KW-0025">Alternative splicing</keyword>
<keyword id="KW-0027">Amidation</keyword>
<keyword id="KW-0165">Cleavage on pair of basic residues</keyword>
<keyword id="KW-0903">Direct protein sequencing</keyword>
<keyword id="KW-0372">Hormone</keyword>
<keyword id="KW-0406">Ion transport</keyword>
<keyword id="KW-0527">Neuropeptide</keyword>
<keyword id="KW-0964">Secreted</keyword>
<keyword id="KW-0732">Signal</keyword>
<keyword id="KW-0813">Transport</keyword>
<proteinExistence type="evidence at protein level"/>
<comment type="function">
    <text evidence="6 7 9">Neuropeptide stimulator of juvenile hormone synthesis. Cardioregulatory neurohormone that increases heart beat rate in the adult but not in the larva. Inhibits active ion transport in the midgut of feeding fourth instar and day 2 fifth instar larva, but not in the midgut of pharate or wandering fifth instar larva.</text>
</comment>
<comment type="subcellular location">
    <subcellularLocation>
        <location>Secreted</location>
    </subcellularLocation>
</comment>
<comment type="alternative products">
    <event type="alternative splicing"/>
    <isoform>
        <id>P21786-1</id>
        <name>1</name>
        <name>3</name>
        <sequence type="displayed"/>
    </isoform>
    <isoform>
        <id>P21786-2</id>
        <name>2</name>
        <name>P408-5</name>
        <sequence type="described" ref="VSP_004112"/>
    </isoform>
    <isoform>
        <id>P21786-3</id>
        <name>3</name>
        <name>PF6-1</name>
        <name>1</name>
        <sequence type="described" ref="VSP_004113 VSP_004114"/>
    </isoform>
    <text>Additional isoforms seem to exist.</text>
</comment>
<comment type="tissue specificity">
    <text evidence="3 4 5 6 7 8 10">Expressed extensively in the brain, frontal ganglion and terminal ganglion of the day 2 fifth instar larva (at protein level). Not expressed in the larval brain after day 4 of the fifth instar, or in the brain of the pupa or adult. Expression in the terminal ganglion is localized to cells in the posterior portion of the seventh neuromere of day 2 fifth instar larvae. In the pupa and adult expression is detected in the medial region of neuromere 6, the dorsal medial region of neuromere 7, and the posterior neuromere of the terminal ganglion (at protein level). In the frontal ganglion expression decreases in the wandering larvae and is present at low levels in during pupal ecdysis, but is not detected in the adult. Expressed in the subesophageal ganglion of day 2 fifth instar larva, but not at any time before or after day 2. Not expressed in the abdominal ganglia 1-6 of the day 2 fifth instar larva (at protein level). Expressed in the anterior neuromeres of the pterothoracic ganglion in pupa but not in adult (at protein level). Expressed in the unfused abdominal ganglia of day 10 pupae, and in pharate adult is expressed in median neurosecretory cells M1, M2 and M5, but not in median neurosecretory cells M3 and M4 (at protein level). Not expressed in the differentiated median neurosecretory cells M5 of the larva (at protein level). In the pharate adult brain isoform 3 is the predominant form, with lower levels of isoform 2 and very low levels of isoform 1 detected. In the pharate adult nerve cord isoform 3 is the predominant form, with lower levels of isoform 2 and no isoform 1 detected. In the pharate adult frontal ganglion isoform 3 is expressed, but not isoform 1 and isoform 2.</text>
</comment>
<comment type="developmental stage">
    <text evidence="4 5 7 8 10">Detected in the day 2 fifth-instar larva, wandering larva, pupa and adult.</text>
</comment>
<comment type="induction">
    <text evidence="4 5">In the 5th instar larva isoform 1 is induced in the nerve cord by starvation, ingestion of the ecdysteroid agonist RH-5992 or parasitization with C.congregata.</text>
</comment>
<dbReference type="EMBL" id="U62100">
    <property type="protein sequence ID" value="AAB08757.1"/>
    <property type="molecule type" value="mRNA"/>
</dbReference>
<dbReference type="EMBL" id="U62101">
    <property type="protein sequence ID" value="AAB08758.1"/>
    <property type="molecule type" value="mRNA"/>
</dbReference>
<dbReference type="EMBL" id="U62102">
    <property type="protein sequence ID" value="AAB08759.1"/>
    <property type="molecule type" value="mRNA"/>
</dbReference>
<dbReference type="SMR" id="P21786"/>
<dbReference type="OrthoDB" id="6101901at2759"/>
<dbReference type="GO" id="GO:0005576">
    <property type="term" value="C:extracellular region"/>
    <property type="evidence" value="ECO:0000314"/>
    <property type="project" value="UniProtKB"/>
</dbReference>
<dbReference type="GO" id="GO:0005184">
    <property type="term" value="F:neuropeptide hormone activity"/>
    <property type="evidence" value="ECO:0000304"/>
    <property type="project" value="UniProtKB"/>
</dbReference>
<dbReference type="GO" id="GO:0006811">
    <property type="term" value="P:monoatomic ion transport"/>
    <property type="evidence" value="ECO:0007669"/>
    <property type="project" value="UniProtKB-KW"/>
</dbReference>
<dbReference type="GO" id="GO:0043271">
    <property type="term" value="P:negative regulation of monoatomic ion transport"/>
    <property type="evidence" value="ECO:0000314"/>
    <property type="project" value="UniProtKB"/>
</dbReference>
<dbReference type="GO" id="GO:0007218">
    <property type="term" value="P:neuropeptide signaling pathway"/>
    <property type="evidence" value="ECO:0000304"/>
    <property type="project" value="UniProtKB"/>
</dbReference>
<dbReference type="GO" id="GO:0045969">
    <property type="term" value="P:positive regulation of juvenile hormone biosynthetic process"/>
    <property type="evidence" value="ECO:0000304"/>
    <property type="project" value="UniProtKB"/>
</dbReference>
<dbReference type="GO" id="GO:0002027">
    <property type="term" value="P:regulation of heart rate"/>
    <property type="evidence" value="ECO:0000314"/>
    <property type="project" value="UniProtKB"/>
</dbReference>
<dbReference type="InterPro" id="IPR018247">
    <property type="entry name" value="EF_Hand_1_Ca_BS"/>
</dbReference>
<feature type="signal peptide" evidence="1">
    <location>
        <begin position="1"/>
        <end position="20"/>
    </location>
</feature>
<feature type="propeptide" id="PRO_0000020685">
    <location>
        <begin position="21"/>
        <end position="35"/>
    </location>
</feature>
<feature type="peptide" id="PRO_0000020686" description="Allatotropin">
    <location>
        <begin position="37"/>
        <end position="49"/>
    </location>
</feature>
<feature type="propeptide" id="PRO_0000020687">
    <location>
        <begin position="53"/>
        <end position="204"/>
    </location>
</feature>
<feature type="region of interest" description="Disordered" evidence="2">
    <location>
        <begin position="47"/>
        <end position="83"/>
    </location>
</feature>
<feature type="compositionally biased region" description="Basic and acidic residues" evidence="2">
    <location>
        <begin position="50"/>
        <end position="65"/>
    </location>
</feature>
<feature type="modified residue" description="Phenylalanine amide" evidence="6">
    <location>
        <position position="49"/>
    </location>
</feature>
<feature type="splice variant" id="VSP_004112" description="In isoform 2." evidence="11">
    <original>RDVDHQAPSARPNRGTPTFKSPTVGIARDFGKRASQYGNEEEIRVTRGTFKPNSNILIARGYGKRTQLPQIDG</original>
    <variation>LTTSPRPWFNPKSKLLVSTRFGKRSGNEENYNEV</variation>
    <location>
        <begin position="61"/>
        <end position="133"/>
    </location>
</feature>
<feature type="splice variant" id="VSP_004113" description="In isoform 3." evidence="11">
    <original>R</original>
    <variation>L</variation>
    <location>
        <position position="61"/>
    </location>
</feature>
<feature type="splice variant" id="VSP_004114" description="In isoform 3." evidence="11">
    <location>
        <begin position="62"/>
        <end position="134"/>
    </location>
</feature>
<evidence type="ECO:0000255" key="1"/>
<evidence type="ECO:0000256" key="2">
    <source>
        <dbReference type="SAM" id="MobiDB-lite"/>
    </source>
</evidence>
<evidence type="ECO:0000269" key="3">
    <source>
    </source>
</evidence>
<evidence type="ECO:0000269" key="4">
    <source>
    </source>
</evidence>
<evidence type="ECO:0000269" key="5">
    <source>
    </source>
</evidence>
<evidence type="ECO:0000269" key="6">
    <source>
    </source>
</evidence>
<evidence type="ECO:0000269" key="7">
    <source>
    </source>
</evidence>
<evidence type="ECO:0000269" key="8">
    <source>
    </source>
</evidence>
<evidence type="ECO:0000269" key="9">
    <source>
    </source>
</evidence>
<evidence type="ECO:0000269" key="10">
    <source>
    </source>
</evidence>
<evidence type="ECO:0000303" key="11">
    <source>
    </source>
</evidence>
<name>ALLT_MANSE</name>